<reference key="1">
    <citation type="journal article" date="2009" name="Plant Cell">
        <title>Nuclear activity of ROXY1, a glutaredoxin interacting with TGA factors, is required for petal development in Arabidopsis thaliana.</title>
        <authorList>
            <person name="Li S."/>
            <person name="Lauri A."/>
            <person name="Ziemann M."/>
            <person name="Busch A."/>
            <person name="Bhave M."/>
            <person name="Zachgo S."/>
        </authorList>
    </citation>
    <scope>NUCLEOTIDE SEQUENCE [MRNA] (ISOFORM 2)</scope>
    <scope>GENE FAMILY</scope>
</reference>
<reference key="2">
    <citation type="journal article" date="2000" name="Nature">
        <title>Sequence and analysis of chromosome 1 of the plant Arabidopsis thaliana.</title>
        <authorList>
            <person name="Theologis A."/>
            <person name="Ecker J.R."/>
            <person name="Palm C.J."/>
            <person name="Federspiel N.A."/>
            <person name="Kaul S."/>
            <person name="White O."/>
            <person name="Alonso J."/>
            <person name="Altafi H."/>
            <person name="Araujo R."/>
            <person name="Bowman C.L."/>
            <person name="Brooks S.Y."/>
            <person name="Buehler E."/>
            <person name="Chan A."/>
            <person name="Chao Q."/>
            <person name="Chen H."/>
            <person name="Cheuk R.F."/>
            <person name="Chin C.W."/>
            <person name="Chung M.K."/>
            <person name="Conn L."/>
            <person name="Conway A.B."/>
            <person name="Conway A.R."/>
            <person name="Creasy T.H."/>
            <person name="Dewar K."/>
            <person name="Dunn P."/>
            <person name="Etgu P."/>
            <person name="Feldblyum T.V."/>
            <person name="Feng J.-D."/>
            <person name="Fong B."/>
            <person name="Fujii C.Y."/>
            <person name="Gill J.E."/>
            <person name="Goldsmith A.D."/>
            <person name="Haas B."/>
            <person name="Hansen N.F."/>
            <person name="Hughes B."/>
            <person name="Huizar L."/>
            <person name="Hunter J.L."/>
            <person name="Jenkins J."/>
            <person name="Johnson-Hopson C."/>
            <person name="Khan S."/>
            <person name="Khaykin E."/>
            <person name="Kim C.J."/>
            <person name="Koo H.L."/>
            <person name="Kremenetskaia I."/>
            <person name="Kurtz D.B."/>
            <person name="Kwan A."/>
            <person name="Lam B."/>
            <person name="Langin-Hooper S."/>
            <person name="Lee A."/>
            <person name="Lee J.M."/>
            <person name="Lenz C.A."/>
            <person name="Li J.H."/>
            <person name="Li Y.-P."/>
            <person name="Lin X."/>
            <person name="Liu S.X."/>
            <person name="Liu Z.A."/>
            <person name="Luros J.S."/>
            <person name="Maiti R."/>
            <person name="Marziali A."/>
            <person name="Militscher J."/>
            <person name="Miranda M."/>
            <person name="Nguyen M."/>
            <person name="Nierman W.C."/>
            <person name="Osborne B.I."/>
            <person name="Pai G."/>
            <person name="Peterson J."/>
            <person name="Pham P.K."/>
            <person name="Rizzo M."/>
            <person name="Rooney T."/>
            <person name="Rowley D."/>
            <person name="Sakano H."/>
            <person name="Salzberg S.L."/>
            <person name="Schwartz J.R."/>
            <person name="Shinn P."/>
            <person name="Southwick A.M."/>
            <person name="Sun H."/>
            <person name="Tallon L.J."/>
            <person name="Tambunga G."/>
            <person name="Toriumi M.J."/>
            <person name="Town C.D."/>
            <person name="Utterback T."/>
            <person name="Van Aken S."/>
            <person name="Vaysberg M."/>
            <person name="Vysotskaia V.S."/>
            <person name="Walker M."/>
            <person name="Wu D."/>
            <person name="Yu G."/>
            <person name="Fraser C.M."/>
            <person name="Venter J.C."/>
            <person name="Davis R.W."/>
        </authorList>
    </citation>
    <scope>NUCLEOTIDE SEQUENCE [LARGE SCALE GENOMIC DNA]</scope>
    <source>
        <strain>cv. Columbia</strain>
    </source>
</reference>
<reference key="3">
    <citation type="journal article" date="2017" name="Plant J.">
        <title>Araport11: a complete reannotation of the Arabidopsis thaliana reference genome.</title>
        <authorList>
            <person name="Cheng C.Y."/>
            <person name="Krishnakumar V."/>
            <person name="Chan A.P."/>
            <person name="Thibaud-Nissen F."/>
            <person name="Schobel S."/>
            <person name="Town C.D."/>
        </authorList>
    </citation>
    <scope>GENOME REANNOTATION</scope>
    <source>
        <strain>cv. Columbia</strain>
    </source>
</reference>
<reference key="4">
    <citation type="journal article" date="2003" name="Science">
        <title>Empirical analysis of transcriptional activity in the Arabidopsis genome.</title>
        <authorList>
            <person name="Yamada K."/>
            <person name="Lim J."/>
            <person name="Dale J.M."/>
            <person name="Chen H."/>
            <person name="Shinn P."/>
            <person name="Palm C.J."/>
            <person name="Southwick A.M."/>
            <person name="Wu H.C."/>
            <person name="Kim C.J."/>
            <person name="Nguyen M."/>
            <person name="Pham P.K."/>
            <person name="Cheuk R.F."/>
            <person name="Karlin-Newmann G."/>
            <person name="Liu S.X."/>
            <person name="Lam B."/>
            <person name="Sakano H."/>
            <person name="Wu T."/>
            <person name="Yu G."/>
            <person name="Miranda M."/>
            <person name="Quach H.L."/>
            <person name="Tripp M."/>
            <person name="Chang C.H."/>
            <person name="Lee J.M."/>
            <person name="Toriumi M.J."/>
            <person name="Chan M.M."/>
            <person name="Tang C.C."/>
            <person name="Onodera C.S."/>
            <person name="Deng J.M."/>
            <person name="Akiyama K."/>
            <person name="Ansari Y."/>
            <person name="Arakawa T."/>
            <person name="Banh J."/>
            <person name="Banno F."/>
            <person name="Bowser L."/>
            <person name="Brooks S.Y."/>
            <person name="Carninci P."/>
            <person name="Chao Q."/>
            <person name="Choy N."/>
            <person name="Enju A."/>
            <person name="Goldsmith A.D."/>
            <person name="Gurjal M."/>
            <person name="Hansen N.F."/>
            <person name="Hayashizaki Y."/>
            <person name="Johnson-Hopson C."/>
            <person name="Hsuan V.W."/>
            <person name="Iida K."/>
            <person name="Karnes M."/>
            <person name="Khan S."/>
            <person name="Koesema E."/>
            <person name="Ishida J."/>
            <person name="Jiang P.X."/>
            <person name="Jones T."/>
            <person name="Kawai J."/>
            <person name="Kamiya A."/>
            <person name="Meyers C."/>
            <person name="Nakajima M."/>
            <person name="Narusaka M."/>
            <person name="Seki M."/>
            <person name="Sakurai T."/>
            <person name="Satou M."/>
            <person name="Tamse R."/>
            <person name="Vaysberg M."/>
            <person name="Wallender E.K."/>
            <person name="Wong C."/>
            <person name="Yamamura Y."/>
            <person name="Yuan S."/>
            <person name="Shinozaki K."/>
            <person name="Davis R.W."/>
            <person name="Theologis A."/>
            <person name="Ecker J.R."/>
        </authorList>
    </citation>
    <scope>NUCLEOTIDE SEQUENCE [LARGE SCALE MRNA] (ISOFORMS 1 AND 2)</scope>
    <source>
        <strain>cv. Columbia</strain>
    </source>
</reference>
<reference key="5">
    <citation type="submission" date="2006-07" db="EMBL/GenBank/DDBJ databases">
        <title>Large-scale analysis of RIKEN Arabidopsis full-length (RAFL) cDNAs.</title>
        <authorList>
            <person name="Totoki Y."/>
            <person name="Seki M."/>
            <person name="Ishida J."/>
            <person name="Nakajima M."/>
            <person name="Enju A."/>
            <person name="Kamiya A."/>
            <person name="Narusaka M."/>
            <person name="Shin-i T."/>
            <person name="Nakagawa M."/>
            <person name="Sakamoto N."/>
            <person name="Oishi K."/>
            <person name="Kohara Y."/>
            <person name="Kobayashi M."/>
            <person name="Toyoda A."/>
            <person name="Sakaki Y."/>
            <person name="Sakurai T."/>
            <person name="Iida K."/>
            <person name="Akiyama K."/>
            <person name="Satou M."/>
            <person name="Toyoda T."/>
            <person name="Konagaya A."/>
            <person name="Carninci P."/>
            <person name="Kawai J."/>
            <person name="Hayashizaki Y."/>
            <person name="Shinozaki K."/>
        </authorList>
    </citation>
    <scope>NUCLEOTIDE SEQUENCE [LARGE SCALE MRNA] (ISOFORMS 1 AND 2)</scope>
    <source>
        <strain>cv. Columbia</strain>
    </source>
</reference>
<reference key="6">
    <citation type="submission" date="2002-03" db="EMBL/GenBank/DDBJ databases">
        <title>Full-length cDNA from Arabidopsis thaliana.</title>
        <authorList>
            <person name="Brover V.V."/>
            <person name="Troukhan M.E."/>
            <person name="Alexandrov N.A."/>
            <person name="Lu Y.-P."/>
            <person name="Flavell R.B."/>
            <person name="Feldmann K.A."/>
        </authorList>
    </citation>
    <scope>NUCLEOTIDE SEQUENCE [LARGE SCALE MRNA] (ISOFORM 1)</scope>
</reference>
<reference key="7">
    <citation type="journal article" date="2004" name="Cell. Mol. Life Sci.">
        <title>Plant glutaredoxins: still mysterious reducing systems.</title>
        <authorList>
            <person name="Rouhier N."/>
            <person name="Gelhaye E."/>
            <person name="Jacquot J.-P."/>
        </authorList>
    </citation>
    <scope>GENE FAMILY</scope>
    <scope>NOMENCLATURE</scope>
</reference>
<reference key="8">
    <citation type="journal article" date="2006" name="J. Exp. Bot.">
        <title>Genome-wide analysis of plant glutaredoxin systems.</title>
        <authorList>
            <person name="Rouhier N."/>
            <person name="Couturier J."/>
            <person name="Jacquot J.-P."/>
        </authorList>
    </citation>
    <scope>GENE FAMILY</scope>
</reference>
<organism>
    <name type="scientific">Arabidopsis thaliana</name>
    <name type="common">Mouse-ear cress</name>
    <dbReference type="NCBI Taxonomy" id="3702"/>
    <lineage>
        <taxon>Eukaryota</taxon>
        <taxon>Viridiplantae</taxon>
        <taxon>Streptophyta</taxon>
        <taxon>Embryophyta</taxon>
        <taxon>Tracheophyta</taxon>
        <taxon>Spermatophyta</taxon>
        <taxon>Magnoliopsida</taxon>
        <taxon>eudicotyledons</taxon>
        <taxon>Gunneridae</taxon>
        <taxon>Pentapetalae</taxon>
        <taxon>rosids</taxon>
        <taxon>malvids</taxon>
        <taxon>Brassicales</taxon>
        <taxon>Brassicaceae</taxon>
        <taxon>Camelineae</taxon>
        <taxon>Arabidopsis</taxon>
    </lineage>
</organism>
<protein>
    <recommendedName>
        <fullName>Monothiol glutaredoxin-S13</fullName>
        <shortName>AtGrxS13</shortName>
    </recommendedName>
    <alternativeName>
        <fullName>Protein ROXY 18</fullName>
    </alternativeName>
</protein>
<keyword id="KW-0001">2Fe-2S</keyword>
<keyword id="KW-0025">Alternative splicing</keyword>
<keyword id="KW-0963">Cytoplasm</keyword>
<keyword id="KW-0408">Iron</keyword>
<keyword id="KW-0411">Iron-sulfur</keyword>
<keyword id="KW-0479">Metal-binding</keyword>
<keyword id="KW-0539">Nucleus</keyword>
<keyword id="KW-0676">Redox-active center</keyword>
<keyword id="KW-1185">Reference proteome</keyword>
<gene>
    <name type="primary">GRXS13</name>
    <name type="synonym">ROXY18</name>
    <name type="ordered locus">At1g03850</name>
    <name type="ORF">F21M11.22</name>
</gene>
<feature type="chain" id="PRO_0000268733" description="Monothiol glutaredoxin-S13">
    <location>
        <begin position="1"/>
        <end position="150"/>
    </location>
</feature>
<feature type="domain" description="Glutaredoxin" evidence="3">
    <location>
        <begin position="53"/>
        <end position="149"/>
    </location>
</feature>
<feature type="region of interest" description="Disordered" evidence="4">
    <location>
        <begin position="30"/>
        <end position="52"/>
    </location>
</feature>
<feature type="short sequence motif" description="Responsive for interaction with TGA factors" evidence="1">
    <location>
        <begin position="147"/>
        <end position="150"/>
    </location>
</feature>
<feature type="compositionally biased region" description="Low complexity" evidence="4">
    <location>
        <begin position="31"/>
        <end position="44"/>
    </location>
</feature>
<feature type="binding site" evidence="2">
    <location>
        <position position="73"/>
    </location>
    <ligand>
        <name>[2Fe-2S] cluster</name>
        <dbReference type="ChEBI" id="CHEBI:190135"/>
        <note>ligand shared between dimeric partners</note>
    </ligand>
</feature>
<feature type="splice variant" id="VSP_022001" description="In isoform 2." evidence="5 6 7">
    <original>GDLVPTLRQAGALWL</original>
    <variation>GHSIKIRTDTWSSFSVATVDRIRW</variation>
    <location>
        <begin position="136"/>
        <end position="150"/>
    </location>
</feature>
<evidence type="ECO:0000250" key="1"/>
<evidence type="ECO:0000255" key="2"/>
<evidence type="ECO:0000255" key="3">
    <source>
        <dbReference type="PROSITE-ProRule" id="PRU00686"/>
    </source>
</evidence>
<evidence type="ECO:0000256" key="4">
    <source>
        <dbReference type="SAM" id="MobiDB-lite"/>
    </source>
</evidence>
<evidence type="ECO:0000303" key="5">
    <source>
    </source>
</evidence>
<evidence type="ECO:0000303" key="6">
    <source>
    </source>
</evidence>
<evidence type="ECO:0000303" key="7">
    <source ref="5"/>
</evidence>
<evidence type="ECO:0000305" key="8"/>
<sequence length="150" mass="16366">MQKAIRPYESPWTKTVPGNSIFLLKNEDKPSSSSSSLSWLTSGSPKPTSISNKRSSNLVVMENAVVVFARRGCCLGHVAKRLLLTHGVNPVVVEIGEEDNNNYDNIVSDKEKLPMMYIGGKLFGGLENLMAAHINGDLVPTLRQAGALWL</sequence>
<accession>Q84TF4</accession>
<accession>C1JGQ8</accession>
<accession>Q94CA3</accession>
<accession>Q9ZWA7</accession>
<comment type="function">
    <text evidence="8">May only reduce GSH-thiol disulfides, but not protein disulfides.</text>
</comment>
<comment type="subcellular location">
    <subcellularLocation>
        <location evidence="1">Cytoplasm</location>
    </subcellularLocation>
    <subcellularLocation>
        <location evidence="1">Nucleus</location>
    </subcellularLocation>
</comment>
<comment type="alternative products">
    <event type="alternative splicing"/>
    <isoform>
        <id>Q84TF4-1</id>
        <name>1</name>
        <sequence type="displayed"/>
    </isoform>
    <isoform>
        <id>Q84TF4-2</id>
        <name>2</name>
        <sequence type="described" ref="VSP_022001"/>
    </isoform>
</comment>
<comment type="similarity">
    <text evidence="8">Belongs to the glutaredoxin family. CC-type subfamily.</text>
</comment>
<comment type="sequence caution" evidence="8">
    <conflict type="erroneous gene model prediction">
        <sequence resource="EMBL-CDS" id="AAD10683"/>
    </conflict>
</comment>
<dbReference type="EMBL" id="FJ611917">
    <property type="protein sequence ID" value="ACO50422.1"/>
    <property type="molecule type" value="mRNA"/>
</dbReference>
<dbReference type="EMBL" id="AC003027">
    <property type="protein sequence ID" value="AAD10683.1"/>
    <property type="status" value="ALT_SEQ"/>
    <property type="molecule type" value="Genomic_DNA"/>
</dbReference>
<dbReference type="EMBL" id="CP002684">
    <property type="protein sequence ID" value="AEE27622.1"/>
    <property type="molecule type" value="Genomic_DNA"/>
</dbReference>
<dbReference type="EMBL" id="CP002684">
    <property type="protein sequence ID" value="AEE27623.1"/>
    <property type="molecule type" value="Genomic_DNA"/>
</dbReference>
<dbReference type="EMBL" id="AY035012">
    <property type="protein sequence ID" value="AAK59517.1"/>
    <property type="molecule type" value="mRNA"/>
</dbReference>
<dbReference type="EMBL" id="AY063052">
    <property type="protein sequence ID" value="AAL34226.1"/>
    <property type="molecule type" value="mRNA"/>
</dbReference>
<dbReference type="EMBL" id="BT005845">
    <property type="protein sequence ID" value="AAO64780.1"/>
    <property type="molecule type" value="mRNA"/>
</dbReference>
<dbReference type="EMBL" id="AK227319">
    <property type="protein sequence ID" value="BAE99333.1"/>
    <property type="molecule type" value="mRNA"/>
</dbReference>
<dbReference type="EMBL" id="AK228449">
    <property type="protein sequence ID" value="BAF00376.1"/>
    <property type="molecule type" value="mRNA"/>
</dbReference>
<dbReference type="EMBL" id="AY086732">
    <property type="protein sequence ID" value="AAM63783.1"/>
    <property type="molecule type" value="mRNA"/>
</dbReference>
<dbReference type="PIR" id="B86169">
    <property type="entry name" value="B86169"/>
</dbReference>
<dbReference type="RefSeq" id="NP_563691.1">
    <molecule id="Q84TF4-1"/>
    <property type="nucleotide sequence ID" value="NM_100265.3"/>
</dbReference>
<dbReference type="RefSeq" id="NP_849586.1">
    <molecule id="Q84TF4-2"/>
    <property type="nucleotide sequence ID" value="NM_179255.3"/>
</dbReference>
<dbReference type="SMR" id="Q84TF4"/>
<dbReference type="BioGRID" id="24627">
    <property type="interactions" value="1"/>
</dbReference>
<dbReference type="FunCoup" id="Q84TF4">
    <property type="interactions" value="1"/>
</dbReference>
<dbReference type="IntAct" id="Q84TF4">
    <property type="interactions" value="1"/>
</dbReference>
<dbReference type="STRING" id="3702.Q84TF4"/>
<dbReference type="PaxDb" id="3702-AT1G03850.1"/>
<dbReference type="EnsemblPlants" id="AT1G03850.1">
    <molecule id="Q84TF4-2"/>
    <property type="protein sequence ID" value="AT1G03850.1"/>
    <property type="gene ID" value="AT1G03850"/>
</dbReference>
<dbReference type="EnsemblPlants" id="AT1G03850.2">
    <molecule id="Q84TF4-1"/>
    <property type="protein sequence ID" value="AT1G03850.2"/>
    <property type="gene ID" value="AT1G03850"/>
</dbReference>
<dbReference type="GeneID" id="839392"/>
<dbReference type="Gramene" id="AT1G03850.1">
    <molecule id="Q84TF4-2"/>
    <property type="protein sequence ID" value="AT1G03850.1"/>
    <property type="gene ID" value="AT1G03850"/>
</dbReference>
<dbReference type="Gramene" id="AT1G03850.2">
    <molecule id="Q84TF4-1"/>
    <property type="protein sequence ID" value="AT1G03850.2"/>
    <property type="gene ID" value="AT1G03850"/>
</dbReference>
<dbReference type="KEGG" id="ath:AT1G03850"/>
<dbReference type="Araport" id="AT1G03850"/>
<dbReference type="TAIR" id="AT1G03850">
    <property type="gene designation" value="GRXS13"/>
</dbReference>
<dbReference type="eggNOG" id="KOG1752">
    <property type="taxonomic scope" value="Eukaryota"/>
</dbReference>
<dbReference type="HOGENOM" id="CLU_026126_6_2_1"/>
<dbReference type="InParanoid" id="Q84TF4"/>
<dbReference type="OMA" id="SWTNTIP"/>
<dbReference type="PhylomeDB" id="Q84TF4"/>
<dbReference type="PRO" id="PR:Q84TF4"/>
<dbReference type="Proteomes" id="UP000006548">
    <property type="component" value="Chromosome 1"/>
</dbReference>
<dbReference type="ExpressionAtlas" id="Q84TF4">
    <property type="expression patterns" value="baseline and differential"/>
</dbReference>
<dbReference type="GO" id="GO:0005737">
    <property type="term" value="C:cytoplasm"/>
    <property type="evidence" value="ECO:0007669"/>
    <property type="project" value="UniProtKB-SubCell"/>
</dbReference>
<dbReference type="GO" id="GO:0005634">
    <property type="term" value="C:nucleus"/>
    <property type="evidence" value="ECO:0007669"/>
    <property type="project" value="UniProtKB-SubCell"/>
</dbReference>
<dbReference type="GO" id="GO:0051537">
    <property type="term" value="F:2 iron, 2 sulfur cluster binding"/>
    <property type="evidence" value="ECO:0007669"/>
    <property type="project" value="UniProtKB-KW"/>
</dbReference>
<dbReference type="GO" id="GO:0046872">
    <property type="term" value="F:metal ion binding"/>
    <property type="evidence" value="ECO:0007669"/>
    <property type="project" value="UniProtKB-KW"/>
</dbReference>
<dbReference type="GO" id="GO:0050832">
    <property type="term" value="P:defense response to fungus"/>
    <property type="evidence" value="ECO:0000315"/>
    <property type="project" value="TAIR"/>
</dbReference>
<dbReference type="GO" id="GO:0000122">
    <property type="term" value="P:negative regulation of transcription by RNA polymerase II"/>
    <property type="evidence" value="ECO:0000314"/>
    <property type="project" value="TAIR"/>
</dbReference>
<dbReference type="GO" id="GO:0009735">
    <property type="term" value="P:response to cytokinin"/>
    <property type="evidence" value="ECO:0000270"/>
    <property type="project" value="TAIR"/>
</dbReference>
<dbReference type="GO" id="GO:0080183">
    <property type="term" value="P:response to photooxidative stress"/>
    <property type="evidence" value="ECO:0000270"/>
    <property type="project" value="TAIR"/>
</dbReference>
<dbReference type="FunFam" id="3.40.30.10:FF:000484">
    <property type="entry name" value="GRXS13"/>
    <property type="match status" value="1"/>
</dbReference>
<dbReference type="Gene3D" id="3.40.30.10">
    <property type="entry name" value="Glutaredoxin"/>
    <property type="match status" value="1"/>
</dbReference>
<dbReference type="InterPro" id="IPR011905">
    <property type="entry name" value="GlrX-like_pln_2"/>
</dbReference>
<dbReference type="InterPro" id="IPR002109">
    <property type="entry name" value="Glutaredoxin"/>
</dbReference>
<dbReference type="InterPro" id="IPR036249">
    <property type="entry name" value="Thioredoxin-like_sf"/>
</dbReference>
<dbReference type="NCBIfam" id="TIGR02189">
    <property type="entry name" value="GlrX-like_plant"/>
    <property type="match status" value="1"/>
</dbReference>
<dbReference type="PANTHER" id="PTHR10168">
    <property type="entry name" value="GLUTAREDOXIN"/>
    <property type="match status" value="1"/>
</dbReference>
<dbReference type="Pfam" id="PF00462">
    <property type="entry name" value="Glutaredoxin"/>
    <property type="match status" value="1"/>
</dbReference>
<dbReference type="SUPFAM" id="SSF52833">
    <property type="entry name" value="Thioredoxin-like"/>
    <property type="match status" value="1"/>
</dbReference>
<dbReference type="PROSITE" id="PS51354">
    <property type="entry name" value="GLUTAREDOXIN_2"/>
    <property type="match status" value="1"/>
</dbReference>
<name>GRS13_ARATH</name>
<proteinExistence type="evidence at transcript level"/>